<gene>
    <name evidence="1" type="primary">pyrB</name>
    <name type="ordered locus">NMCC_2044</name>
</gene>
<feature type="chain" id="PRO_1000073734" description="Aspartate carbamoyltransferase catalytic subunit">
    <location>
        <begin position="1"/>
        <end position="306"/>
    </location>
</feature>
<feature type="binding site" evidence="1">
    <location>
        <position position="55"/>
    </location>
    <ligand>
        <name>carbamoyl phosphate</name>
        <dbReference type="ChEBI" id="CHEBI:58228"/>
    </ligand>
</feature>
<feature type="binding site" evidence="1">
    <location>
        <position position="56"/>
    </location>
    <ligand>
        <name>carbamoyl phosphate</name>
        <dbReference type="ChEBI" id="CHEBI:58228"/>
    </ligand>
</feature>
<feature type="binding site" evidence="1">
    <location>
        <position position="84"/>
    </location>
    <ligand>
        <name>L-aspartate</name>
        <dbReference type="ChEBI" id="CHEBI:29991"/>
    </ligand>
</feature>
<feature type="binding site" evidence="1">
    <location>
        <position position="105"/>
    </location>
    <ligand>
        <name>carbamoyl phosphate</name>
        <dbReference type="ChEBI" id="CHEBI:58228"/>
    </ligand>
</feature>
<feature type="binding site" evidence="1">
    <location>
        <position position="133"/>
    </location>
    <ligand>
        <name>carbamoyl phosphate</name>
        <dbReference type="ChEBI" id="CHEBI:58228"/>
    </ligand>
</feature>
<feature type="binding site" evidence="1">
    <location>
        <position position="136"/>
    </location>
    <ligand>
        <name>carbamoyl phosphate</name>
        <dbReference type="ChEBI" id="CHEBI:58228"/>
    </ligand>
</feature>
<feature type="binding site" evidence="1">
    <location>
        <position position="166"/>
    </location>
    <ligand>
        <name>L-aspartate</name>
        <dbReference type="ChEBI" id="CHEBI:29991"/>
    </ligand>
</feature>
<feature type="binding site" evidence="1">
    <location>
        <position position="227"/>
    </location>
    <ligand>
        <name>L-aspartate</name>
        <dbReference type="ChEBI" id="CHEBI:29991"/>
    </ligand>
</feature>
<feature type="binding site" evidence="1">
    <location>
        <position position="265"/>
    </location>
    <ligand>
        <name>carbamoyl phosphate</name>
        <dbReference type="ChEBI" id="CHEBI:58228"/>
    </ligand>
</feature>
<feature type="binding site" evidence="1">
    <location>
        <position position="266"/>
    </location>
    <ligand>
        <name>carbamoyl phosphate</name>
        <dbReference type="ChEBI" id="CHEBI:58228"/>
    </ligand>
</feature>
<accession>A9M469</accession>
<keyword id="KW-0665">Pyrimidine biosynthesis</keyword>
<keyword id="KW-0808">Transferase</keyword>
<proteinExistence type="inferred from homology"/>
<reference key="1">
    <citation type="journal article" date="2008" name="Genomics">
        <title>Characterization of ST-4821 complex, a unique Neisseria meningitidis clone.</title>
        <authorList>
            <person name="Peng J."/>
            <person name="Yang L."/>
            <person name="Yang F."/>
            <person name="Yang J."/>
            <person name="Yan Y."/>
            <person name="Nie H."/>
            <person name="Zhang X."/>
            <person name="Xiong Z."/>
            <person name="Jiang Y."/>
            <person name="Cheng F."/>
            <person name="Xu X."/>
            <person name="Chen S."/>
            <person name="Sun L."/>
            <person name="Li W."/>
            <person name="Shen Y."/>
            <person name="Shao Z."/>
            <person name="Liang X."/>
            <person name="Xu J."/>
            <person name="Jin Q."/>
        </authorList>
    </citation>
    <scope>NUCLEOTIDE SEQUENCE [LARGE SCALE GENOMIC DNA]</scope>
    <source>
        <strain>053442</strain>
    </source>
</reference>
<organism>
    <name type="scientific">Neisseria meningitidis serogroup C (strain 053442)</name>
    <dbReference type="NCBI Taxonomy" id="374833"/>
    <lineage>
        <taxon>Bacteria</taxon>
        <taxon>Pseudomonadati</taxon>
        <taxon>Pseudomonadota</taxon>
        <taxon>Betaproteobacteria</taxon>
        <taxon>Neisseriales</taxon>
        <taxon>Neisseriaceae</taxon>
        <taxon>Neisseria</taxon>
    </lineage>
</organism>
<evidence type="ECO:0000255" key="1">
    <source>
        <dbReference type="HAMAP-Rule" id="MF_00001"/>
    </source>
</evidence>
<comment type="function">
    <text evidence="1">Catalyzes the condensation of carbamoyl phosphate and aspartate to form carbamoyl aspartate and inorganic phosphate, the committed step in the de novo pyrimidine nucleotide biosynthesis pathway.</text>
</comment>
<comment type="catalytic activity">
    <reaction evidence="1">
        <text>carbamoyl phosphate + L-aspartate = N-carbamoyl-L-aspartate + phosphate + H(+)</text>
        <dbReference type="Rhea" id="RHEA:20013"/>
        <dbReference type="ChEBI" id="CHEBI:15378"/>
        <dbReference type="ChEBI" id="CHEBI:29991"/>
        <dbReference type="ChEBI" id="CHEBI:32814"/>
        <dbReference type="ChEBI" id="CHEBI:43474"/>
        <dbReference type="ChEBI" id="CHEBI:58228"/>
        <dbReference type="EC" id="2.1.3.2"/>
    </reaction>
</comment>
<comment type="pathway">
    <text evidence="1">Pyrimidine metabolism; UMP biosynthesis via de novo pathway; (S)-dihydroorotate from bicarbonate: step 2/3.</text>
</comment>
<comment type="subunit">
    <text evidence="1">Heterododecamer (2C3:3R2) of six catalytic PyrB chains organized as two trimers (C3), and six regulatory PyrI chains organized as three dimers (R2).</text>
</comment>
<comment type="similarity">
    <text evidence="1">Belongs to the aspartate/ornithine carbamoyltransferase superfamily. ATCase family.</text>
</comment>
<dbReference type="EC" id="2.1.3.2" evidence="1"/>
<dbReference type="EMBL" id="CP000381">
    <property type="protein sequence ID" value="ABX74163.1"/>
    <property type="molecule type" value="Genomic_DNA"/>
</dbReference>
<dbReference type="RefSeq" id="WP_002221826.1">
    <property type="nucleotide sequence ID" value="NC_010120.1"/>
</dbReference>
<dbReference type="SMR" id="A9M469"/>
<dbReference type="KEGG" id="nmn:NMCC_2044"/>
<dbReference type="HOGENOM" id="CLU_043846_1_2_4"/>
<dbReference type="UniPathway" id="UPA00070">
    <property type="reaction ID" value="UER00116"/>
</dbReference>
<dbReference type="Proteomes" id="UP000001177">
    <property type="component" value="Chromosome"/>
</dbReference>
<dbReference type="GO" id="GO:0005829">
    <property type="term" value="C:cytosol"/>
    <property type="evidence" value="ECO:0007669"/>
    <property type="project" value="TreeGrafter"/>
</dbReference>
<dbReference type="GO" id="GO:0016597">
    <property type="term" value="F:amino acid binding"/>
    <property type="evidence" value="ECO:0007669"/>
    <property type="project" value="InterPro"/>
</dbReference>
<dbReference type="GO" id="GO:0004070">
    <property type="term" value="F:aspartate carbamoyltransferase activity"/>
    <property type="evidence" value="ECO:0007669"/>
    <property type="project" value="UniProtKB-UniRule"/>
</dbReference>
<dbReference type="GO" id="GO:0006207">
    <property type="term" value="P:'de novo' pyrimidine nucleobase biosynthetic process"/>
    <property type="evidence" value="ECO:0007669"/>
    <property type="project" value="InterPro"/>
</dbReference>
<dbReference type="GO" id="GO:0044205">
    <property type="term" value="P:'de novo' UMP biosynthetic process"/>
    <property type="evidence" value="ECO:0007669"/>
    <property type="project" value="UniProtKB-UniRule"/>
</dbReference>
<dbReference type="GO" id="GO:0006520">
    <property type="term" value="P:amino acid metabolic process"/>
    <property type="evidence" value="ECO:0007669"/>
    <property type="project" value="InterPro"/>
</dbReference>
<dbReference type="FunFam" id="3.40.50.1370:FF:000001">
    <property type="entry name" value="Aspartate carbamoyltransferase"/>
    <property type="match status" value="1"/>
</dbReference>
<dbReference type="FunFam" id="3.40.50.1370:FF:000002">
    <property type="entry name" value="Aspartate carbamoyltransferase 2"/>
    <property type="match status" value="1"/>
</dbReference>
<dbReference type="Gene3D" id="3.40.50.1370">
    <property type="entry name" value="Aspartate/ornithine carbamoyltransferase"/>
    <property type="match status" value="2"/>
</dbReference>
<dbReference type="HAMAP" id="MF_00001">
    <property type="entry name" value="Asp_carb_tr"/>
    <property type="match status" value="1"/>
</dbReference>
<dbReference type="InterPro" id="IPR006132">
    <property type="entry name" value="Asp/Orn_carbamoyltranf_P-bd"/>
</dbReference>
<dbReference type="InterPro" id="IPR006130">
    <property type="entry name" value="Asp/Orn_carbamoylTrfase"/>
</dbReference>
<dbReference type="InterPro" id="IPR036901">
    <property type="entry name" value="Asp/Orn_carbamoylTrfase_sf"/>
</dbReference>
<dbReference type="InterPro" id="IPR002082">
    <property type="entry name" value="Asp_carbamoyltransf"/>
</dbReference>
<dbReference type="InterPro" id="IPR006131">
    <property type="entry name" value="Asp_carbamoyltransf_Asp/Orn-bd"/>
</dbReference>
<dbReference type="NCBIfam" id="TIGR00670">
    <property type="entry name" value="asp_carb_tr"/>
    <property type="match status" value="1"/>
</dbReference>
<dbReference type="NCBIfam" id="NF002032">
    <property type="entry name" value="PRK00856.1"/>
    <property type="match status" value="1"/>
</dbReference>
<dbReference type="PANTHER" id="PTHR45753:SF6">
    <property type="entry name" value="ASPARTATE CARBAMOYLTRANSFERASE"/>
    <property type="match status" value="1"/>
</dbReference>
<dbReference type="PANTHER" id="PTHR45753">
    <property type="entry name" value="ORNITHINE CARBAMOYLTRANSFERASE, MITOCHONDRIAL"/>
    <property type="match status" value="1"/>
</dbReference>
<dbReference type="Pfam" id="PF00185">
    <property type="entry name" value="OTCace"/>
    <property type="match status" value="1"/>
</dbReference>
<dbReference type="Pfam" id="PF02729">
    <property type="entry name" value="OTCace_N"/>
    <property type="match status" value="1"/>
</dbReference>
<dbReference type="PRINTS" id="PR00100">
    <property type="entry name" value="AOTCASE"/>
</dbReference>
<dbReference type="PRINTS" id="PR00101">
    <property type="entry name" value="ATCASE"/>
</dbReference>
<dbReference type="SUPFAM" id="SSF53671">
    <property type="entry name" value="Aspartate/ornithine carbamoyltransferase"/>
    <property type="match status" value="1"/>
</dbReference>
<dbReference type="PROSITE" id="PS00097">
    <property type="entry name" value="CARBAMOYLTRANSFERASE"/>
    <property type="match status" value="1"/>
</dbReference>
<name>PYRB_NEIM0</name>
<sequence>MPNPLYRQHIISISDLSREQLECLLQTALKLKAHPRGDLLEGKLIGSCFFEPSTRTRLSFETAVQCLGGKVIGFSDGANTSAKKGETLADTARIISGYTDAIIQRHPKDGAARVAAEFSRVPVINAGDGTNQHPSQTLLDLVTIYETQGRLDKLKIAMAGDLKYGRTVHSLCQALKRWGCEFAFVSPPSLAMPDYITEELDEAGCRYRILGSLEEAAEWADILYMTRVQRERFDEQEFAKIQGKFNLEASMLARAKPNLRVLHPLPRVDEIHPDVDATPHAYYFEQATNGVYARMAILSLVLNEEV</sequence>
<protein>
    <recommendedName>
        <fullName evidence="1">Aspartate carbamoyltransferase catalytic subunit</fullName>
        <ecNumber evidence="1">2.1.3.2</ecNumber>
    </recommendedName>
    <alternativeName>
        <fullName evidence="1">Aspartate transcarbamylase</fullName>
        <shortName evidence="1">ATCase</shortName>
    </alternativeName>
</protein>